<comment type="function">
    <text evidence="5 6">Sodium export from cell, takes up external protons in exchange for internal sodium ions (Probable). Also capable of exporting potassium ions (PubMed:22329368).</text>
</comment>
<comment type="subcellular location">
    <subcellularLocation>
        <location evidence="1">Cell membrane</location>
        <topology evidence="6">Multi-pass membrane protein</topology>
    </subcellularLocation>
</comment>
<comment type="miscellaneous">
    <text evidence="4">Present with 1480 molecules/cell in log phase SD medium.</text>
</comment>
<comment type="similarity">
    <text evidence="6">Belongs to the fungal Na(+)/H(+) exchanger family.</text>
</comment>
<reference key="1">
    <citation type="journal article" date="1996" name="FEBS Lett.">
        <title>Characterization of the NHA1 gene encoding a Na+/H+-antiporter of the yeast Saccharomyces cerevisiae.</title>
        <authorList>
            <person name="Prior C."/>
            <person name="Potier S."/>
            <person name="Souciet J.-L."/>
            <person name="Sychrova H."/>
        </authorList>
    </citation>
    <scope>NUCLEOTIDE SEQUENCE [GENOMIC DNA]</scope>
</reference>
<reference key="2">
    <citation type="journal article" date="1997" name="Nature">
        <title>The nucleotide sequence of Saccharomyces cerevisiae chromosome XII.</title>
        <authorList>
            <person name="Johnston M."/>
            <person name="Hillier L.W."/>
            <person name="Riles L."/>
            <person name="Albermann K."/>
            <person name="Andre B."/>
            <person name="Ansorge W."/>
            <person name="Benes V."/>
            <person name="Brueckner M."/>
            <person name="Delius H."/>
            <person name="Dubois E."/>
            <person name="Duesterhoeft A."/>
            <person name="Entian K.-D."/>
            <person name="Floeth M."/>
            <person name="Goffeau A."/>
            <person name="Hebling U."/>
            <person name="Heumann K."/>
            <person name="Heuss-Neitzel D."/>
            <person name="Hilbert H."/>
            <person name="Hilger F."/>
            <person name="Kleine K."/>
            <person name="Koetter P."/>
            <person name="Louis E.J."/>
            <person name="Messenguy F."/>
            <person name="Mewes H.-W."/>
            <person name="Miosga T."/>
            <person name="Moestl D."/>
            <person name="Mueller-Auer S."/>
            <person name="Nentwich U."/>
            <person name="Obermaier B."/>
            <person name="Piravandi E."/>
            <person name="Pohl T.M."/>
            <person name="Portetelle D."/>
            <person name="Purnelle B."/>
            <person name="Rechmann S."/>
            <person name="Rieger M."/>
            <person name="Rinke M."/>
            <person name="Rose M."/>
            <person name="Scharfe M."/>
            <person name="Scherens B."/>
            <person name="Scholler P."/>
            <person name="Schwager C."/>
            <person name="Schwarz S."/>
            <person name="Underwood A.P."/>
            <person name="Urrestarazu L.A."/>
            <person name="Vandenbol M."/>
            <person name="Verhasselt P."/>
            <person name="Vierendeels F."/>
            <person name="Voet M."/>
            <person name="Volckaert G."/>
            <person name="Voss H."/>
            <person name="Wambutt R."/>
            <person name="Wedler E."/>
            <person name="Wedler H."/>
            <person name="Zimmermann F.K."/>
            <person name="Zollner A."/>
            <person name="Hani J."/>
            <person name="Hoheisel J.D."/>
        </authorList>
    </citation>
    <scope>NUCLEOTIDE SEQUENCE [LARGE SCALE GENOMIC DNA]</scope>
    <source>
        <strain>ATCC 204508 / S288c</strain>
    </source>
</reference>
<reference key="3">
    <citation type="journal article" date="2014" name="G3 (Bethesda)">
        <title>The reference genome sequence of Saccharomyces cerevisiae: Then and now.</title>
        <authorList>
            <person name="Engel S.R."/>
            <person name="Dietrich F.S."/>
            <person name="Fisk D.G."/>
            <person name="Binkley G."/>
            <person name="Balakrishnan R."/>
            <person name="Costanzo M.C."/>
            <person name="Dwight S.S."/>
            <person name="Hitz B.C."/>
            <person name="Karra K."/>
            <person name="Nash R.S."/>
            <person name="Weng S."/>
            <person name="Wong E.D."/>
            <person name="Lloyd P."/>
            <person name="Skrzypek M.S."/>
            <person name="Miyasato S.R."/>
            <person name="Simison M."/>
            <person name="Cherry J.M."/>
        </authorList>
    </citation>
    <scope>GENOME REANNOTATION</scope>
    <source>
        <strain>ATCC 204508 / S288c</strain>
    </source>
</reference>
<reference key="4">
    <citation type="journal article" date="2003" name="Nature">
        <title>Global analysis of protein expression in yeast.</title>
        <authorList>
            <person name="Ghaemmaghami S."/>
            <person name="Huh W.-K."/>
            <person name="Bower K."/>
            <person name="Howson R.W."/>
            <person name="Belle A."/>
            <person name="Dephoure N."/>
            <person name="O'Shea E.K."/>
            <person name="Weissman J.S."/>
        </authorList>
    </citation>
    <scope>LEVEL OF PROTEIN EXPRESSION [LARGE SCALE ANALYSIS]</scope>
</reference>
<reference key="5">
    <citation type="journal article" date="2006" name="Proc. Natl. Acad. Sci. U.S.A.">
        <title>A global topology map of the Saccharomyces cerevisiae membrane proteome.</title>
        <authorList>
            <person name="Kim H."/>
            <person name="Melen K."/>
            <person name="Oesterberg M."/>
            <person name="von Heijne G."/>
        </authorList>
    </citation>
    <scope>TOPOLOGY [LARGE SCALE ANALYSIS]</scope>
    <source>
        <strain>ATCC 208353 / W303-1A</strain>
    </source>
</reference>
<reference key="6">
    <citation type="journal article" date="2007" name="J. Proteome Res.">
        <title>Large-scale phosphorylation analysis of alpha-factor-arrested Saccharomyces cerevisiae.</title>
        <authorList>
            <person name="Li X."/>
            <person name="Gerber S.A."/>
            <person name="Rudner A.D."/>
            <person name="Beausoleil S.A."/>
            <person name="Haas W."/>
            <person name="Villen J."/>
            <person name="Elias J.E."/>
            <person name="Gygi S.P."/>
        </authorList>
    </citation>
    <scope>PHOSPHORYLATION [LARGE SCALE ANALYSIS] AT SER-568; THR-765; SER-768 AND SER-774</scope>
    <scope>IDENTIFICATION BY MASS SPECTROMETRY [LARGE SCALE ANALYSIS]</scope>
    <source>
        <strain>ADR376</strain>
    </source>
</reference>
<reference key="7">
    <citation type="journal article" date="2007" name="Proc. Natl. Acad. Sci. U.S.A.">
        <title>Analysis of phosphorylation sites on proteins from Saccharomyces cerevisiae by electron transfer dissociation (ETD) mass spectrometry.</title>
        <authorList>
            <person name="Chi A."/>
            <person name="Huttenhower C."/>
            <person name="Geer L.Y."/>
            <person name="Coon J.J."/>
            <person name="Syka J.E.P."/>
            <person name="Bai D.L."/>
            <person name="Shabanowitz J."/>
            <person name="Burke D.J."/>
            <person name="Troyanskaya O.G."/>
            <person name="Hunt D.F."/>
        </authorList>
    </citation>
    <scope>IDENTIFICATION BY MASS SPECTROMETRY [LARGE SCALE ANALYSIS]</scope>
</reference>
<reference key="8">
    <citation type="journal article" date="2008" name="Mol. Cell. Proteomics">
        <title>A multidimensional chromatography technology for in-depth phosphoproteome analysis.</title>
        <authorList>
            <person name="Albuquerque C.P."/>
            <person name="Smolka M.B."/>
            <person name="Payne S.H."/>
            <person name="Bafna V."/>
            <person name="Eng J."/>
            <person name="Zhou H."/>
        </authorList>
    </citation>
    <scope>IDENTIFICATION BY MASS SPECTROMETRY [LARGE SCALE ANALYSIS]</scope>
</reference>
<reference key="9">
    <citation type="journal article" date="2009" name="Science">
        <title>Global analysis of Cdk1 substrate phosphorylation sites provides insights into evolution.</title>
        <authorList>
            <person name="Holt L.J."/>
            <person name="Tuch B.B."/>
            <person name="Villen J."/>
            <person name="Johnson A.D."/>
            <person name="Gygi S.P."/>
            <person name="Morgan D.O."/>
        </authorList>
    </citation>
    <scope>PHOSPHORYLATION [LARGE SCALE ANALYSIS] AT SER-568; THR-765 AND SER-768</scope>
    <scope>IDENTIFICATION BY MASS SPECTROMETRY [LARGE SCALE ANALYSIS]</scope>
</reference>
<reference key="10">
    <citation type="journal article" date="2012" name="FEMS Yeast Res.">
        <title>Plasma-membrane hyperpolarization diminishes the cation efflux via Nha1 antiporter and Ena ATPase under potassium-limiting conditions.</title>
        <authorList>
            <person name="Zahradka J."/>
            <person name="Sychrova H."/>
        </authorList>
    </citation>
    <scope>FUNCTION</scope>
</reference>
<feature type="chain" id="PRO_0000052407" description="Na(+)/H(+) antiporter">
    <location>
        <begin position="1"/>
        <end position="985"/>
    </location>
</feature>
<feature type="topological domain" description="Cytoplasmic" evidence="2">
    <location>
        <begin position="1"/>
        <end position="12"/>
    </location>
</feature>
<feature type="transmembrane region" description="Helical" evidence="2">
    <location>
        <begin position="13"/>
        <end position="33"/>
    </location>
</feature>
<feature type="topological domain" description="Extracellular" evidence="2">
    <location>
        <begin position="34"/>
        <end position="36"/>
    </location>
</feature>
<feature type="transmembrane region" description="Helical" evidence="2">
    <location>
        <begin position="37"/>
        <end position="57"/>
    </location>
</feature>
<feature type="topological domain" description="Cytoplasmic" evidence="2">
    <location>
        <begin position="58"/>
        <end position="70"/>
    </location>
</feature>
<feature type="transmembrane region" description="Helical" evidence="2">
    <location>
        <begin position="71"/>
        <end position="91"/>
    </location>
</feature>
<feature type="topological domain" description="Extracellular" evidence="2">
    <location>
        <begin position="92"/>
        <end position="105"/>
    </location>
</feature>
<feature type="transmembrane region" description="Helical" evidence="2">
    <location>
        <begin position="106"/>
        <end position="126"/>
    </location>
</feature>
<feature type="topological domain" description="Cytoplasmic" evidence="2">
    <location>
        <begin position="127"/>
        <end position="128"/>
    </location>
</feature>
<feature type="transmembrane region" description="Helical" evidence="2">
    <location>
        <begin position="129"/>
        <end position="149"/>
    </location>
</feature>
<feature type="topological domain" description="Extracellular" evidence="2">
    <location>
        <begin position="150"/>
        <end position="176"/>
    </location>
</feature>
<feature type="transmembrane region" description="Helical" evidence="2">
    <location>
        <begin position="177"/>
        <end position="197"/>
    </location>
</feature>
<feature type="topological domain" description="Cytoplasmic" evidence="2">
    <location>
        <begin position="198"/>
        <end position="203"/>
    </location>
</feature>
<feature type="transmembrane region" description="Helical" evidence="2">
    <location>
        <begin position="204"/>
        <end position="224"/>
    </location>
</feature>
<feature type="topological domain" description="Extracellular" evidence="2">
    <location>
        <begin position="225"/>
        <end position="244"/>
    </location>
</feature>
<feature type="transmembrane region" description="Helical" evidence="2">
    <location>
        <begin position="245"/>
        <end position="265"/>
    </location>
</feature>
<feature type="topological domain" description="Cytoplasmic" evidence="2">
    <location>
        <begin position="266"/>
        <end position="294"/>
    </location>
</feature>
<feature type="transmembrane region" description="Helical" evidence="2">
    <location>
        <begin position="295"/>
        <end position="315"/>
    </location>
</feature>
<feature type="topological domain" description="Extracellular" evidence="2">
    <location>
        <begin position="316"/>
        <end position="319"/>
    </location>
</feature>
<feature type="transmembrane region" description="Helical" evidence="2">
    <location>
        <begin position="320"/>
        <end position="340"/>
    </location>
</feature>
<feature type="topological domain" description="Cytoplasmic" evidence="2">
    <location>
        <begin position="341"/>
        <end position="361"/>
    </location>
</feature>
<feature type="transmembrane region" description="Helical" evidence="2">
    <location>
        <begin position="362"/>
        <end position="382"/>
    </location>
</feature>
<feature type="topological domain" description="Extracellular" evidence="2">
    <location>
        <begin position="383"/>
        <end position="410"/>
    </location>
</feature>
<feature type="transmembrane region" description="Helical" evidence="2">
    <location>
        <begin position="411"/>
        <end position="431"/>
    </location>
</feature>
<feature type="topological domain" description="Cytoplasmic" evidence="2">
    <location>
        <begin position="432"/>
        <end position="985"/>
    </location>
</feature>
<feature type="region of interest" description="Disordered" evidence="3">
    <location>
        <begin position="489"/>
        <end position="701"/>
    </location>
</feature>
<feature type="region of interest" description="Disordered" evidence="3">
    <location>
        <begin position="726"/>
        <end position="760"/>
    </location>
</feature>
<feature type="region of interest" description="Disordered" evidence="3">
    <location>
        <begin position="812"/>
        <end position="985"/>
    </location>
</feature>
<feature type="compositionally biased region" description="Polar residues" evidence="3">
    <location>
        <begin position="517"/>
        <end position="526"/>
    </location>
</feature>
<feature type="compositionally biased region" description="Basic residues" evidence="3">
    <location>
        <begin position="538"/>
        <end position="558"/>
    </location>
</feature>
<feature type="compositionally biased region" description="Basic and acidic residues" evidence="3">
    <location>
        <begin position="559"/>
        <end position="572"/>
    </location>
</feature>
<feature type="compositionally biased region" description="Basic and acidic residues" evidence="3">
    <location>
        <begin position="580"/>
        <end position="593"/>
    </location>
</feature>
<feature type="compositionally biased region" description="Low complexity" evidence="3">
    <location>
        <begin position="637"/>
        <end position="646"/>
    </location>
</feature>
<feature type="compositionally biased region" description="Acidic residues" evidence="3">
    <location>
        <begin position="661"/>
        <end position="675"/>
    </location>
</feature>
<feature type="compositionally biased region" description="Basic and acidic residues" evidence="3">
    <location>
        <begin position="676"/>
        <end position="698"/>
    </location>
</feature>
<feature type="compositionally biased region" description="Low complexity" evidence="3">
    <location>
        <begin position="743"/>
        <end position="756"/>
    </location>
</feature>
<feature type="compositionally biased region" description="Basic and acidic residues" evidence="3">
    <location>
        <begin position="815"/>
        <end position="828"/>
    </location>
</feature>
<feature type="compositionally biased region" description="Basic and acidic residues" evidence="3">
    <location>
        <begin position="854"/>
        <end position="863"/>
    </location>
</feature>
<feature type="compositionally biased region" description="Acidic residues" evidence="3">
    <location>
        <begin position="887"/>
        <end position="920"/>
    </location>
</feature>
<feature type="compositionally biased region" description="Low complexity" evidence="3">
    <location>
        <begin position="970"/>
        <end position="979"/>
    </location>
</feature>
<feature type="modified residue" description="Phosphoserine" evidence="7 8">
    <location>
        <position position="568"/>
    </location>
</feature>
<feature type="modified residue" description="Phosphothreonine" evidence="7 8">
    <location>
        <position position="765"/>
    </location>
</feature>
<feature type="modified residue" description="Phosphoserine" evidence="7 8">
    <location>
        <position position="768"/>
    </location>
</feature>
<feature type="modified residue" description="Phosphoserine" evidence="7">
    <location>
        <position position="774"/>
    </location>
</feature>
<organism>
    <name type="scientific">Saccharomyces cerevisiae (strain ATCC 204508 / S288c)</name>
    <name type="common">Baker's yeast</name>
    <dbReference type="NCBI Taxonomy" id="559292"/>
    <lineage>
        <taxon>Eukaryota</taxon>
        <taxon>Fungi</taxon>
        <taxon>Dikarya</taxon>
        <taxon>Ascomycota</taxon>
        <taxon>Saccharomycotina</taxon>
        <taxon>Saccharomycetes</taxon>
        <taxon>Saccharomycetales</taxon>
        <taxon>Saccharomycetaceae</taxon>
        <taxon>Saccharomyces</taxon>
    </lineage>
</organism>
<accession>Q99271</accession>
<accession>D6VYD3</accession>
<gene>
    <name type="primary">NHA1</name>
    <name type="ordered locus">YLR138W</name>
    <name type="ORF">L3149</name>
    <name type="ORF">L9606.4</name>
</gene>
<evidence type="ECO:0000250" key="1">
    <source>
        <dbReference type="UniProtKB" id="P36606"/>
    </source>
</evidence>
<evidence type="ECO:0000255" key="2"/>
<evidence type="ECO:0000256" key="3">
    <source>
        <dbReference type="SAM" id="MobiDB-lite"/>
    </source>
</evidence>
<evidence type="ECO:0000269" key="4">
    <source>
    </source>
</evidence>
<evidence type="ECO:0000269" key="5">
    <source>
    </source>
</evidence>
<evidence type="ECO:0000305" key="6"/>
<evidence type="ECO:0007744" key="7">
    <source>
    </source>
</evidence>
<evidence type="ECO:0007744" key="8">
    <source>
    </source>
</evidence>
<dbReference type="EMBL" id="U53881">
    <property type="protein sequence ID" value="AAB82392.1"/>
    <property type="molecule type" value="Genomic_DNA"/>
</dbReference>
<dbReference type="EMBL" id="X91258">
    <property type="protein sequence ID" value="CAA62653.1"/>
    <property type="molecule type" value="Genomic_DNA"/>
</dbReference>
<dbReference type="EMBL" id="Z73310">
    <property type="protein sequence ID" value="CAA97709.1"/>
    <property type="molecule type" value="Genomic_DNA"/>
</dbReference>
<dbReference type="EMBL" id="Z73311">
    <property type="protein sequence ID" value="CAA97711.1"/>
    <property type="molecule type" value="Genomic_DNA"/>
</dbReference>
<dbReference type="EMBL" id="BK006945">
    <property type="protein sequence ID" value="DAA09449.1"/>
    <property type="molecule type" value="Genomic_DNA"/>
</dbReference>
<dbReference type="PIR" id="S59330">
    <property type="entry name" value="S59330"/>
</dbReference>
<dbReference type="RefSeq" id="NP_013239.1">
    <property type="nucleotide sequence ID" value="NM_001182025.1"/>
</dbReference>
<dbReference type="PDB" id="6QK8">
    <property type="method" value="X-ray"/>
    <property type="resolution" value="2.92 A"/>
    <property type="chains" value="E/F/G/H=478-485"/>
</dbReference>
<dbReference type="PDBsum" id="6QK8"/>
<dbReference type="SMR" id="Q99271"/>
<dbReference type="BioGRID" id="31407">
    <property type="interactions" value="111"/>
</dbReference>
<dbReference type="DIP" id="DIP-6364N"/>
<dbReference type="FunCoup" id="Q99271">
    <property type="interactions" value="60"/>
</dbReference>
<dbReference type="IntAct" id="Q99271">
    <property type="interactions" value="5"/>
</dbReference>
<dbReference type="MINT" id="Q99271"/>
<dbReference type="STRING" id="4932.YLR138W"/>
<dbReference type="TCDB" id="2.A.36.4.1">
    <property type="family name" value="the monovalent cation:proton antiporter-1 (cpa1) family"/>
</dbReference>
<dbReference type="iPTMnet" id="Q99271"/>
<dbReference type="PaxDb" id="4932-YLR138W"/>
<dbReference type="PeptideAtlas" id="Q99271"/>
<dbReference type="EnsemblFungi" id="YLR138W_mRNA">
    <property type="protein sequence ID" value="YLR138W"/>
    <property type="gene ID" value="YLR138W"/>
</dbReference>
<dbReference type="GeneID" id="850829"/>
<dbReference type="KEGG" id="sce:YLR138W"/>
<dbReference type="AGR" id="SGD:S000004128"/>
<dbReference type="SGD" id="S000004128">
    <property type="gene designation" value="NHA1"/>
</dbReference>
<dbReference type="VEuPathDB" id="FungiDB:YLR138W"/>
<dbReference type="eggNOG" id="KOG4505">
    <property type="taxonomic scope" value="Eukaryota"/>
</dbReference>
<dbReference type="HOGENOM" id="CLU_008635_0_1_1"/>
<dbReference type="InParanoid" id="Q99271"/>
<dbReference type="OMA" id="WPITCFF"/>
<dbReference type="OrthoDB" id="5327978at2759"/>
<dbReference type="BioCyc" id="YEAST:G3O-32278-MONOMER"/>
<dbReference type="BioGRID-ORCS" id="850829">
    <property type="hits" value="6 hits in 10 CRISPR screens"/>
</dbReference>
<dbReference type="PRO" id="PR:Q99271"/>
<dbReference type="Proteomes" id="UP000002311">
    <property type="component" value="Chromosome XII"/>
</dbReference>
<dbReference type="RNAct" id="Q99271">
    <property type="molecule type" value="protein"/>
</dbReference>
<dbReference type="GO" id="GO:0005783">
    <property type="term" value="C:endoplasmic reticulum"/>
    <property type="evidence" value="ECO:0007005"/>
    <property type="project" value="SGD"/>
</dbReference>
<dbReference type="GO" id="GO:0045121">
    <property type="term" value="C:membrane raft"/>
    <property type="evidence" value="ECO:0000314"/>
    <property type="project" value="SGD"/>
</dbReference>
<dbReference type="GO" id="GO:0005886">
    <property type="term" value="C:plasma membrane"/>
    <property type="evidence" value="ECO:0000314"/>
    <property type="project" value="SGD"/>
</dbReference>
<dbReference type="GO" id="GO:0015079">
    <property type="term" value="F:potassium ion transmembrane transporter activity"/>
    <property type="evidence" value="ECO:0007669"/>
    <property type="project" value="InterPro"/>
</dbReference>
<dbReference type="GO" id="GO:0015385">
    <property type="term" value="F:sodium:proton antiporter activity"/>
    <property type="evidence" value="ECO:0000314"/>
    <property type="project" value="SGD"/>
</dbReference>
<dbReference type="GO" id="GO:0030003">
    <property type="term" value="P:intracellular monoatomic cation homeostasis"/>
    <property type="evidence" value="ECO:0000315"/>
    <property type="project" value="SGD"/>
</dbReference>
<dbReference type="GO" id="GO:0030007">
    <property type="term" value="P:intracellular potassium ion homeostasis"/>
    <property type="evidence" value="ECO:0000315"/>
    <property type="project" value="SGD"/>
</dbReference>
<dbReference type="GO" id="GO:0097623">
    <property type="term" value="P:potassium ion export across plasma membrane"/>
    <property type="evidence" value="ECO:0000315"/>
    <property type="project" value="SGD"/>
</dbReference>
<dbReference type="GO" id="GO:0120029">
    <property type="term" value="P:proton export across plasma membrane"/>
    <property type="evidence" value="ECO:0007669"/>
    <property type="project" value="InterPro"/>
</dbReference>
<dbReference type="GO" id="GO:0042391">
    <property type="term" value="P:regulation of membrane potential"/>
    <property type="evidence" value="ECO:0007669"/>
    <property type="project" value="InterPro"/>
</dbReference>
<dbReference type="GO" id="GO:0006970">
    <property type="term" value="P:response to osmotic stress"/>
    <property type="evidence" value="ECO:0000315"/>
    <property type="project" value="SGD"/>
</dbReference>
<dbReference type="GO" id="GO:0036376">
    <property type="term" value="P:sodium ion export across plasma membrane"/>
    <property type="evidence" value="ECO:0000315"/>
    <property type="project" value="SGD"/>
</dbReference>
<dbReference type="GO" id="GO:0035725">
    <property type="term" value="P:sodium ion transmembrane transport"/>
    <property type="evidence" value="ECO:0000318"/>
    <property type="project" value="GO_Central"/>
</dbReference>
<dbReference type="FunFam" id="1.20.1530.20:FF:000015">
    <property type="entry name" value="Na(+)/H(+) antiporter 2"/>
    <property type="match status" value="1"/>
</dbReference>
<dbReference type="Gene3D" id="1.20.1530.20">
    <property type="match status" value="1"/>
</dbReference>
<dbReference type="InterPro" id="IPR013928">
    <property type="entry name" value="Cation/H_antiporter_C"/>
</dbReference>
<dbReference type="InterPro" id="IPR006153">
    <property type="entry name" value="Cation/H_exchanger_TM"/>
</dbReference>
<dbReference type="InterPro" id="IPR004712">
    <property type="entry name" value="Na+/H+_antiporter_fungi"/>
</dbReference>
<dbReference type="InterPro" id="IPR038770">
    <property type="entry name" value="Na+/solute_symporter_sf"/>
</dbReference>
<dbReference type="InterPro" id="IPR032516">
    <property type="entry name" value="Nha1"/>
</dbReference>
<dbReference type="NCBIfam" id="TIGR00844">
    <property type="entry name" value="c_cpa1"/>
    <property type="match status" value="1"/>
</dbReference>
<dbReference type="PANTHER" id="PTHR31382">
    <property type="entry name" value="NA(+)/H(+) ANTIPORTER"/>
    <property type="match status" value="1"/>
</dbReference>
<dbReference type="PANTHER" id="PTHR31382:SF4">
    <property type="entry name" value="NA(+)_H(+) ANTIPORTER"/>
    <property type="match status" value="1"/>
</dbReference>
<dbReference type="Pfam" id="PF00999">
    <property type="entry name" value="Na_H_Exchanger"/>
    <property type="match status" value="1"/>
</dbReference>
<dbReference type="Pfam" id="PF08619">
    <property type="entry name" value="Nha1_C"/>
    <property type="match status" value="2"/>
</dbReference>
<proteinExistence type="evidence at protein level"/>
<sequence length="985" mass="109369">MAIWEQLEVSKAHVAYACVGVFSSIFSLVSLYVKEKLYIGESTVAGIFGLIVGPVCLNWFNPLKWGNSDSITLEITRIVLCLQIFAVAVELPRKYMLKHWVSVTMLLLPVMTAGWLIIGLFVWILIPGLNFSASLLISACITATDPILAQSVVSGKFAQRVPGHLRNLLSAESGCNDGMAFPFLFLSMNLILHPGNGREIVKDWICVTILYECLFGCLLGCFIGYVGRITIRFAEKKNIIDRESFLAFYVVLAFMCAGFGSILGVDDLLVSFAAGATFAWDGWFSQKTQESNVSTVIDLLLNYAYFIYFGAIIPWSQFNNGEIGTNVWRLIILSIVVIFLRRIPAVMILRPLIPDIKSWREALFVGHFGPIGVGAIFAAILARGELESTFSDEPTPLNVVPSKEESKHWQLIACIWPITCFFIVTSIIVHGSSVAIITLGRHLNTITLTKTFTTHTTNGDNGKSSWMQRLPSLDKAGRSFSLHRMDTQMTLSGDEGEAEEGGGRKGLAGGEDEEGLNNDQIGSVATSGIPARPAGGMPRRRKLSRKEKRLNRRQKLRNKGREIFSSRSKNEMYDDDELNDLGRERLQKEKEARAATFALSTAVNTQRNEEIGMGGDEEEDEYTPEKEYSDNYNNTPSFESSERSSSLRGRTYVPRNRYDGEETESEIESEDEMENESERSMASSEERRIRKMKEEEMKPGTAYLDGNRMIIENKQGEILNQVDIEDRNEARDDEVSVDSTAHSSLTTTMTNLSSSSGGRLKRILTPTSLGKIHSLVDKGKDKNKNSKYHAFKIDNLLIIENEDGDVIKRYKINPHKSDDDKSKNRPRNDSVVSRALTAVGLKSKANSGVPPPVDEEKAIEGPSRKGPGMLKKRTLTPAPPRGVQDSLDLEDEPSSEEDLGDSYNMDDSEDYDDNAYESETEFERQRRLNALGEMTAPADQDDEELPPLPVEAQTGNDGPGTAEGKKKQKSAAVKSALSKTLGLNK</sequence>
<name>NAH1_YEAST</name>
<keyword id="KW-0002">3D-structure</keyword>
<keyword id="KW-0050">Antiport</keyword>
<keyword id="KW-1003">Cell membrane</keyword>
<keyword id="KW-0406">Ion transport</keyword>
<keyword id="KW-0472">Membrane</keyword>
<keyword id="KW-0597">Phosphoprotein</keyword>
<keyword id="KW-1185">Reference proteome</keyword>
<keyword id="KW-0915">Sodium</keyword>
<keyword id="KW-0739">Sodium transport</keyword>
<keyword id="KW-0812">Transmembrane</keyword>
<keyword id="KW-1133">Transmembrane helix</keyword>
<keyword id="KW-0813">Transport</keyword>
<protein>
    <recommendedName>
        <fullName>Na(+)/H(+) antiporter</fullName>
    </recommendedName>
</protein>